<evidence type="ECO:0000255" key="1">
    <source>
        <dbReference type="HAMAP-Rule" id="MF_01152"/>
    </source>
</evidence>
<accession>B7N7N9</accession>
<sequence>MAKQDYYEILGVSKTAEEREIKKAYKRLAMKYHPDRNQGDKEAEAKFKEIKEAYEVLTDSQKRAAYDQYGHAAFEQGGMGGGGFGGGADFSDIFGDVFGDIFGGGRGRQRAARGADLRYNMELTLEEAVRGVTKEIRIPTLEECDVCHGSGAKPGTQPQTCPTCHGSGQVQMRQGFFAVQQTCPHCQGRGTLIKDPCNKCHGHGRVERSKTLSVKIPAGVDTGDRIRLAGEGEAGEHGAPAGDLYVQVQVKQHPIFEREGNNLYCEVPINFAMAALGGEIEVPTLDGRVKLKVPGETQTGKLFRMRGKGVKSVRGGAQGDLLCRVVVETPVGLNEKQKQLLQELQESFGGPTGEHNSPRSKSFFDGVKKFFDDLTR</sequence>
<dbReference type="EMBL" id="CU928163">
    <property type="protein sequence ID" value="CAR11239.1"/>
    <property type="molecule type" value="Genomic_DNA"/>
</dbReference>
<dbReference type="RefSeq" id="WP_001118464.1">
    <property type="nucleotide sequence ID" value="NC_011751.1"/>
</dbReference>
<dbReference type="RefSeq" id="YP_002410794.1">
    <property type="nucleotide sequence ID" value="NC_011751.1"/>
</dbReference>
<dbReference type="SMR" id="B7N7N9"/>
<dbReference type="STRING" id="585056.ECUMN_0015"/>
<dbReference type="GeneID" id="93777428"/>
<dbReference type="KEGG" id="eum:ECUMN_0015"/>
<dbReference type="PATRIC" id="fig|585056.7.peg.198"/>
<dbReference type="HOGENOM" id="CLU_017633_0_7_6"/>
<dbReference type="Proteomes" id="UP000007097">
    <property type="component" value="Chromosome"/>
</dbReference>
<dbReference type="GO" id="GO:0005737">
    <property type="term" value="C:cytoplasm"/>
    <property type="evidence" value="ECO:0007669"/>
    <property type="project" value="UniProtKB-SubCell"/>
</dbReference>
<dbReference type="GO" id="GO:0005524">
    <property type="term" value="F:ATP binding"/>
    <property type="evidence" value="ECO:0007669"/>
    <property type="project" value="InterPro"/>
</dbReference>
<dbReference type="GO" id="GO:0031072">
    <property type="term" value="F:heat shock protein binding"/>
    <property type="evidence" value="ECO:0007669"/>
    <property type="project" value="InterPro"/>
</dbReference>
<dbReference type="GO" id="GO:0051082">
    <property type="term" value="F:unfolded protein binding"/>
    <property type="evidence" value="ECO:0007669"/>
    <property type="project" value="UniProtKB-UniRule"/>
</dbReference>
<dbReference type="GO" id="GO:0008270">
    <property type="term" value="F:zinc ion binding"/>
    <property type="evidence" value="ECO:0007669"/>
    <property type="project" value="UniProtKB-UniRule"/>
</dbReference>
<dbReference type="GO" id="GO:0051085">
    <property type="term" value="P:chaperone cofactor-dependent protein refolding"/>
    <property type="evidence" value="ECO:0007669"/>
    <property type="project" value="TreeGrafter"/>
</dbReference>
<dbReference type="GO" id="GO:0006260">
    <property type="term" value="P:DNA replication"/>
    <property type="evidence" value="ECO:0007669"/>
    <property type="project" value="UniProtKB-KW"/>
</dbReference>
<dbReference type="GO" id="GO:0042026">
    <property type="term" value="P:protein refolding"/>
    <property type="evidence" value="ECO:0007669"/>
    <property type="project" value="TreeGrafter"/>
</dbReference>
<dbReference type="GO" id="GO:0009408">
    <property type="term" value="P:response to heat"/>
    <property type="evidence" value="ECO:0007669"/>
    <property type="project" value="InterPro"/>
</dbReference>
<dbReference type="CDD" id="cd06257">
    <property type="entry name" value="DnaJ"/>
    <property type="match status" value="1"/>
</dbReference>
<dbReference type="CDD" id="cd10747">
    <property type="entry name" value="DnaJ_C"/>
    <property type="match status" value="1"/>
</dbReference>
<dbReference type="CDD" id="cd10719">
    <property type="entry name" value="DnaJ_zf"/>
    <property type="match status" value="1"/>
</dbReference>
<dbReference type="FunFam" id="1.10.287.110:FF:000003">
    <property type="entry name" value="Molecular chaperone DnaJ"/>
    <property type="match status" value="1"/>
</dbReference>
<dbReference type="FunFam" id="2.10.230.10:FF:000002">
    <property type="entry name" value="Molecular chaperone DnaJ"/>
    <property type="match status" value="1"/>
</dbReference>
<dbReference type="FunFam" id="2.60.260.20:FF:000004">
    <property type="entry name" value="Molecular chaperone DnaJ"/>
    <property type="match status" value="1"/>
</dbReference>
<dbReference type="Gene3D" id="1.10.287.110">
    <property type="entry name" value="DnaJ domain"/>
    <property type="match status" value="1"/>
</dbReference>
<dbReference type="Gene3D" id="2.10.230.10">
    <property type="entry name" value="Heat shock protein DnaJ, cysteine-rich domain"/>
    <property type="match status" value="1"/>
</dbReference>
<dbReference type="Gene3D" id="2.60.260.20">
    <property type="entry name" value="Urease metallochaperone UreE, N-terminal domain"/>
    <property type="match status" value="2"/>
</dbReference>
<dbReference type="HAMAP" id="MF_01152">
    <property type="entry name" value="DnaJ"/>
    <property type="match status" value="1"/>
</dbReference>
<dbReference type="InterPro" id="IPR012724">
    <property type="entry name" value="DnaJ"/>
</dbReference>
<dbReference type="InterPro" id="IPR002939">
    <property type="entry name" value="DnaJ_C"/>
</dbReference>
<dbReference type="InterPro" id="IPR001623">
    <property type="entry name" value="DnaJ_domain"/>
</dbReference>
<dbReference type="InterPro" id="IPR018253">
    <property type="entry name" value="DnaJ_domain_CS"/>
</dbReference>
<dbReference type="InterPro" id="IPR008971">
    <property type="entry name" value="HSP40/DnaJ_pept-bd"/>
</dbReference>
<dbReference type="InterPro" id="IPR001305">
    <property type="entry name" value="HSP_DnaJ_Cys-rich_dom"/>
</dbReference>
<dbReference type="InterPro" id="IPR036410">
    <property type="entry name" value="HSP_DnaJ_Cys-rich_dom_sf"/>
</dbReference>
<dbReference type="InterPro" id="IPR036869">
    <property type="entry name" value="J_dom_sf"/>
</dbReference>
<dbReference type="NCBIfam" id="TIGR02349">
    <property type="entry name" value="DnaJ_bact"/>
    <property type="match status" value="1"/>
</dbReference>
<dbReference type="NCBIfam" id="NF008035">
    <property type="entry name" value="PRK10767.1"/>
    <property type="match status" value="1"/>
</dbReference>
<dbReference type="PANTHER" id="PTHR43096:SF48">
    <property type="entry name" value="CHAPERONE PROTEIN DNAJ"/>
    <property type="match status" value="1"/>
</dbReference>
<dbReference type="PANTHER" id="PTHR43096">
    <property type="entry name" value="DNAJ HOMOLOG 1, MITOCHONDRIAL-RELATED"/>
    <property type="match status" value="1"/>
</dbReference>
<dbReference type="Pfam" id="PF00226">
    <property type="entry name" value="DnaJ"/>
    <property type="match status" value="1"/>
</dbReference>
<dbReference type="Pfam" id="PF01556">
    <property type="entry name" value="DnaJ_C"/>
    <property type="match status" value="1"/>
</dbReference>
<dbReference type="Pfam" id="PF00684">
    <property type="entry name" value="DnaJ_CXXCXGXG"/>
    <property type="match status" value="1"/>
</dbReference>
<dbReference type="PRINTS" id="PR00625">
    <property type="entry name" value="JDOMAIN"/>
</dbReference>
<dbReference type="SMART" id="SM00271">
    <property type="entry name" value="DnaJ"/>
    <property type="match status" value="1"/>
</dbReference>
<dbReference type="SUPFAM" id="SSF46565">
    <property type="entry name" value="Chaperone J-domain"/>
    <property type="match status" value="1"/>
</dbReference>
<dbReference type="SUPFAM" id="SSF57938">
    <property type="entry name" value="DnaJ/Hsp40 cysteine-rich domain"/>
    <property type="match status" value="1"/>
</dbReference>
<dbReference type="SUPFAM" id="SSF49493">
    <property type="entry name" value="HSP40/DnaJ peptide-binding domain"/>
    <property type="match status" value="2"/>
</dbReference>
<dbReference type="PROSITE" id="PS00636">
    <property type="entry name" value="DNAJ_1"/>
    <property type="match status" value="1"/>
</dbReference>
<dbReference type="PROSITE" id="PS50076">
    <property type="entry name" value="DNAJ_2"/>
    <property type="match status" value="1"/>
</dbReference>
<dbReference type="PROSITE" id="PS51188">
    <property type="entry name" value="ZF_CR"/>
    <property type="match status" value="1"/>
</dbReference>
<comment type="function">
    <text evidence="1">Participates actively in the response to hyperosmotic and heat shock by preventing the aggregation of stress-denatured proteins and by disaggregating proteins, also in an autonomous, DnaK-independent fashion. Unfolded proteins bind initially to DnaJ; upon interaction with the DnaJ-bound protein, DnaK hydrolyzes its bound ATP, resulting in the formation of a stable complex. GrpE releases ADP from DnaK; ATP binding to DnaK triggers the release of the substrate protein, thus completing the reaction cycle. Several rounds of ATP-dependent interactions between DnaJ, DnaK and GrpE are required for fully efficient folding. Also involved, together with DnaK and GrpE, in the DNA replication of plasmids through activation of initiation proteins.</text>
</comment>
<comment type="cofactor">
    <cofactor evidence="1">
        <name>Zn(2+)</name>
        <dbReference type="ChEBI" id="CHEBI:29105"/>
    </cofactor>
    <text evidence="1">Binds 2 Zn(2+) ions per monomer.</text>
</comment>
<comment type="subunit">
    <text evidence="1">Homodimer.</text>
</comment>
<comment type="subcellular location">
    <subcellularLocation>
        <location evidence="1">Cytoplasm</location>
    </subcellularLocation>
</comment>
<comment type="domain">
    <text evidence="1">The J domain is necessary and sufficient to stimulate DnaK ATPase activity. Zinc center 1 plays an important role in the autonomous, DnaK-independent chaperone activity of DnaJ. Zinc center 2 is essential for interaction with DnaK and for DnaJ activity.</text>
</comment>
<comment type="similarity">
    <text evidence="1">Belongs to the DnaJ family.</text>
</comment>
<feature type="chain" id="PRO_1000137687" description="Chaperone protein DnaJ">
    <location>
        <begin position="1"/>
        <end position="376"/>
    </location>
</feature>
<feature type="domain" description="J" evidence="1">
    <location>
        <begin position="5"/>
        <end position="70"/>
    </location>
</feature>
<feature type="repeat" description="CXXCXGXG motif">
    <location>
        <begin position="144"/>
        <end position="151"/>
    </location>
</feature>
<feature type="repeat" description="CXXCXGXG motif">
    <location>
        <begin position="161"/>
        <end position="168"/>
    </location>
</feature>
<feature type="repeat" description="CXXCXGXG motif">
    <location>
        <begin position="183"/>
        <end position="190"/>
    </location>
</feature>
<feature type="repeat" description="CXXCXGXG motif">
    <location>
        <begin position="197"/>
        <end position="204"/>
    </location>
</feature>
<feature type="zinc finger region" description="CR-type" evidence="1">
    <location>
        <begin position="131"/>
        <end position="209"/>
    </location>
</feature>
<feature type="binding site" evidence="1">
    <location>
        <position position="144"/>
    </location>
    <ligand>
        <name>Zn(2+)</name>
        <dbReference type="ChEBI" id="CHEBI:29105"/>
        <label>1</label>
    </ligand>
</feature>
<feature type="binding site" evidence="1">
    <location>
        <position position="147"/>
    </location>
    <ligand>
        <name>Zn(2+)</name>
        <dbReference type="ChEBI" id="CHEBI:29105"/>
        <label>1</label>
    </ligand>
</feature>
<feature type="binding site" evidence="1">
    <location>
        <position position="161"/>
    </location>
    <ligand>
        <name>Zn(2+)</name>
        <dbReference type="ChEBI" id="CHEBI:29105"/>
        <label>2</label>
    </ligand>
</feature>
<feature type="binding site" evidence="1">
    <location>
        <position position="164"/>
    </location>
    <ligand>
        <name>Zn(2+)</name>
        <dbReference type="ChEBI" id="CHEBI:29105"/>
        <label>2</label>
    </ligand>
</feature>
<feature type="binding site" evidence="1">
    <location>
        <position position="183"/>
    </location>
    <ligand>
        <name>Zn(2+)</name>
        <dbReference type="ChEBI" id="CHEBI:29105"/>
        <label>2</label>
    </ligand>
</feature>
<feature type="binding site" evidence="1">
    <location>
        <position position="186"/>
    </location>
    <ligand>
        <name>Zn(2+)</name>
        <dbReference type="ChEBI" id="CHEBI:29105"/>
        <label>2</label>
    </ligand>
</feature>
<feature type="binding site" evidence="1">
    <location>
        <position position="197"/>
    </location>
    <ligand>
        <name>Zn(2+)</name>
        <dbReference type="ChEBI" id="CHEBI:29105"/>
        <label>1</label>
    </ligand>
</feature>
<feature type="binding site" evidence="1">
    <location>
        <position position="200"/>
    </location>
    <ligand>
        <name>Zn(2+)</name>
        <dbReference type="ChEBI" id="CHEBI:29105"/>
        <label>1</label>
    </ligand>
</feature>
<name>DNAJ_ECOLU</name>
<protein>
    <recommendedName>
        <fullName evidence="1">Chaperone protein DnaJ</fullName>
    </recommendedName>
</protein>
<keyword id="KW-0143">Chaperone</keyword>
<keyword id="KW-0963">Cytoplasm</keyword>
<keyword id="KW-0235">DNA replication</keyword>
<keyword id="KW-0479">Metal-binding</keyword>
<keyword id="KW-0677">Repeat</keyword>
<keyword id="KW-0346">Stress response</keyword>
<keyword id="KW-0862">Zinc</keyword>
<keyword id="KW-0863">Zinc-finger</keyword>
<reference key="1">
    <citation type="journal article" date="2009" name="PLoS Genet.">
        <title>Organised genome dynamics in the Escherichia coli species results in highly diverse adaptive paths.</title>
        <authorList>
            <person name="Touchon M."/>
            <person name="Hoede C."/>
            <person name="Tenaillon O."/>
            <person name="Barbe V."/>
            <person name="Baeriswyl S."/>
            <person name="Bidet P."/>
            <person name="Bingen E."/>
            <person name="Bonacorsi S."/>
            <person name="Bouchier C."/>
            <person name="Bouvet O."/>
            <person name="Calteau A."/>
            <person name="Chiapello H."/>
            <person name="Clermont O."/>
            <person name="Cruveiller S."/>
            <person name="Danchin A."/>
            <person name="Diard M."/>
            <person name="Dossat C."/>
            <person name="Karoui M.E."/>
            <person name="Frapy E."/>
            <person name="Garry L."/>
            <person name="Ghigo J.M."/>
            <person name="Gilles A.M."/>
            <person name="Johnson J."/>
            <person name="Le Bouguenec C."/>
            <person name="Lescat M."/>
            <person name="Mangenot S."/>
            <person name="Martinez-Jehanne V."/>
            <person name="Matic I."/>
            <person name="Nassif X."/>
            <person name="Oztas S."/>
            <person name="Petit M.A."/>
            <person name="Pichon C."/>
            <person name="Rouy Z."/>
            <person name="Ruf C.S."/>
            <person name="Schneider D."/>
            <person name="Tourret J."/>
            <person name="Vacherie B."/>
            <person name="Vallenet D."/>
            <person name="Medigue C."/>
            <person name="Rocha E.P.C."/>
            <person name="Denamur E."/>
        </authorList>
    </citation>
    <scope>NUCLEOTIDE SEQUENCE [LARGE SCALE GENOMIC DNA]</scope>
    <source>
        <strain>UMN026 / ExPEC</strain>
    </source>
</reference>
<organism>
    <name type="scientific">Escherichia coli O17:K52:H18 (strain UMN026 / ExPEC)</name>
    <dbReference type="NCBI Taxonomy" id="585056"/>
    <lineage>
        <taxon>Bacteria</taxon>
        <taxon>Pseudomonadati</taxon>
        <taxon>Pseudomonadota</taxon>
        <taxon>Gammaproteobacteria</taxon>
        <taxon>Enterobacterales</taxon>
        <taxon>Enterobacteriaceae</taxon>
        <taxon>Escherichia</taxon>
    </lineage>
</organism>
<gene>
    <name evidence="1" type="primary">dnaJ</name>
    <name type="ordered locus">ECUMN_0015</name>
</gene>
<proteinExistence type="inferred from homology"/>